<feature type="signal peptide" evidence="1">
    <location>
        <begin position="1"/>
        <end position="45"/>
    </location>
</feature>
<feature type="chain" id="PRO_0000289105" description="Meteorin-like protein">
    <location>
        <begin position="46"/>
        <end position="311"/>
    </location>
</feature>
<feature type="glycosylation site" description="N-linked (GlcNAc...) asparagine" evidence="1">
    <location>
        <position position="103"/>
    </location>
</feature>
<feature type="disulfide bond" evidence="2">
    <location>
        <begin position="52"/>
        <end position="75"/>
    </location>
</feature>
<feature type="disulfide bond" evidence="2">
    <location>
        <begin position="107"/>
        <end position="143"/>
    </location>
</feature>
<feature type="disulfide bond" evidence="2">
    <location>
        <begin position="188"/>
        <end position="260"/>
    </location>
</feature>
<feature type="disulfide bond" evidence="2">
    <location>
        <begin position="191"/>
        <end position="284"/>
    </location>
</feature>
<feature type="disulfide bond" evidence="2">
    <location>
        <begin position="201"/>
        <end position="306"/>
    </location>
</feature>
<feature type="splice variant" id="VSP_025897" description="In isoform 2." evidence="5">
    <location>
        <begin position="1"/>
        <end position="82"/>
    </location>
</feature>
<feature type="helix" evidence="7">
    <location>
        <begin position="193"/>
        <end position="202"/>
    </location>
</feature>
<feature type="strand" evidence="7">
    <location>
        <begin position="203"/>
        <end position="217"/>
    </location>
</feature>
<feature type="helix" evidence="7">
    <location>
        <begin position="218"/>
        <end position="220"/>
    </location>
</feature>
<feature type="strand" evidence="7">
    <location>
        <begin position="222"/>
        <end position="234"/>
    </location>
</feature>
<feature type="strand" evidence="7">
    <location>
        <begin position="240"/>
        <end position="242"/>
    </location>
</feature>
<feature type="strand" evidence="7">
    <location>
        <begin position="244"/>
        <end position="246"/>
    </location>
</feature>
<feature type="strand" evidence="7">
    <location>
        <begin position="250"/>
        <end position="257"/>
    </location>
</feature>
<feature type="helix" evidence="7">
    <location>
        <begin position="258"/>
        <end position="261"/>
    </location>
</feature>
<feature type="strand" evidence="7">
    <location>
        <begin position="266"/>
        <end position="276"/>
    </location>
</feature>
<feature type="strand" evidence="7">
    <location>
        <begin position="279"/>
        <end position="284"/>
    </location>
</feature>
<feature type="helix" evidence="7">
    <location>
        <begin position="288"/>
        <end position="301"/>
    </location>
</feature>
<organism>
    <name type="scientific">Mus musculus</name>
    <name type="common">Mouse</name>
    <dbReference type="NCBI Taxonomy" id="10090"/>
    <lineage>
        <taxon>Eukaryota</taxon>
        <taxon>Metazoa</taxon>
        <taxon>Chordata</taxon>
        <taxon>Craniata</taxon>
        <taxon>Vertebrata</taxon>
        <taxon>Euteleostomi</taxon>
        <taxon>Mammalia</taxon>
        <taxon>Eutheria</taxon>
        <taxon>Euarchontoglires</taxon>
        <taxon>Glires</taxon>
        <taxon>Rodentia</taxon>
        <taxon>Myomorpha</taxon>
        <taxon>Muroidea</taxon>
        <taxon>Muridae</taxon>
        <taxon>Murinae</taxon>
        <taxon>Mus</taxon>
        <taxon>Mus</taxon>
    </lineage>
</organism>
<comment type="function">
    <text evidence="4">Hormone induced following exercise or cold exposure that promotes energy expenditure. Induced either in the skeletal muscle after exercise or in adipose tissue following cold exposure and is present in the circulation. Able to stimulate energy expenditure associated with the browning of the white fat depots and improves glucose tolerance. Does not promote an increase in a thermogenic gene program via direct action on adipocytes, but acts by stimulating several immune cell subtypes to enter the adipose tissue and activate their prothermogenic actions. Stimulates an eosinophil-dependent increase in IL4 expression and promotes alternative activation of adipose tissue macrophages, which are required for the increased expression of the thermogenic and anti-inflammatory gene programs in fat. Required for some cold-induced thermogenic responses, suggesting a role in metabolic adaptations to cold temperatures.</text>
</comment>
<comment type="subcellular location">
    <subcellularLocation>
        <location evidence="3 4">Secreted</location>
    </subcellularLocation>
</comment>
<comment type="alternative products">
    <event type="alternative splicing"/>
    <isoform>
        <id>Q8VE43-1</id>
        <name>1</name>
        <sequence type="displayed"/>
    </isoform>
    <isoform>
        <id>Q8VE43-2</id>
        <name>2</name>
        <sequence type="described" ref="VSP_025897"/>
    </isoform>
</comment>
<comment type="tissue specificity">
    <text evidence="3 4">Highly expressed in subcutaneous adipose tissue.</text>
</comment>
<comment type="induction">
    <text evidence="3 4">Up-regulated during adipogenesis and obesity. Induced either in muscle after exercise or in adipose tissue upon cold exposure (at protein level). Expression is induced by Ppargc1a isoform 4 (PubMed:24906147).</text>
</comment>
<comment type="PTM">
    <text evidence="3">N-glycosylated.</text>
</comment>
<comment type="similarity">
    <text evidence="6">Belongs to the meteorin family.</text>
</comment>
<sequence length="311" mass="34530">MRGAVWAARRRAGQQWPRSPGPGPGPPPPPPLLLLLLLLLGGASAQYSSDLCSWKGSGLTREARSKEVEQVYLRCSAGSVEWMYPTGALIVNLRPNTFSPAQNLTVCIKPFRDSSGANIYLEKTGELRLLVRDIRGEPGQVQCFSLEQGGLFVEATPQQDISRRTTGFQYELMSGQRGLDLHVLSAPCRPCSDTEVLLAICTSDFVVRGFIEDVTHVPEQQVSVIYLRVNRLHRQKSRVFQPAPEDSGHWLGHVTTLLQCGVRPGHGEFLFTGHVHFGEAQLGCAPRFSDFQRMYRKAEEMGINPCEINME</sequence>
<proteinExistence type="evidence at protein level"/>
<accession>Q8VE43</accession>
<accession>Q8R1J2</accession>
<dbReference type="EMBL" id="AK034855">
    <property type="protein sequence ID" value="BAC28856.1"/>
    <property type="molecule type" value="mRNA"/>
</dbReference>
<dbReference type="EMBL" id="AL645972">
    <property type="status" value="NOT_ANNOTATED_CDS"/>
    <property type="molecule type" value="Genomic_DNA"/>
</dbReference>
<dbReference type="EMBL" id="BC019776">
    <property type="protein sequence ID" value="AAH19776.1"/>
    <property type="molecule type" value="mRNA"/>
</dbReference>
<dbReference type="EMBL" id="BC024445">
    <property type="protein sequence ID" value="AAH24445.1"/>
    <property type="molecule type" value="mRNA"/>
</dbReference>
<dbReference type="EMBL" id="BC024497">
    <property type="protein sequence ID" value="AAH24497.1"/>
    <property type="molecule type" value="mRNA"/>
</dbReference>
<dbReference type="EMBL" id="BC026646">
    <property type="protein sequence ID" value="AAH26646.1"/>
    <property type="molecule type" value="mRNA"/>
</dbReference>
<dbReference type="CCDS" id="CCDS25781.1">
    <molecule id="Q8VE43-1"/>
</dbReference>
<dbReference type="RefSeq" id="NP_659046.1">
    <molecule id="Q8VE43-1"/>
    <property type="nucleotide sequence ID" value="NM_144797.3"/>
</dbReference>
<dbReference type="PDB" id="7TLW">
    <property type="method" value="X-ray"/>
    <property type="resolution" value="1.75 A"/>
    <property type="chains" value="A=172-311"/>
</dbReference>
<dbReference type="PDBsum" id="7TLW"/>
<dbReference type="SMR" id="Q8VE43"/>
<dbReference type="FunCoup" id="Q8VE43">
    <property type="interactions" value="379"/>
</dbReference>
<dbReference type="STRING" id="10090.ENSMUSP00000038126"/>
<dbReference type="GlyCosmos" id="Q8VE43">
    <property type="glycosylation" value="1 site, No reported glycans"/>
</dbReference>
<dbReference type="GlyGen" id="Q8VE43">
    <property type="glycosylation" value="1 site"/>
</dbReference>
<dbReference type="PhosphoSitePlus" id="Q8VE43"/>
<dbReference type="PaxDb" id="10090-ENSMUSP00000038126"/>
<dbReference type="PeptideAtlas" id="Q8VE43"/>
<dbReference type="ProteomicsDB" id="295552">
    <molecule id="Q8VE43-1"/>
</dbReference>
<dbReference type="ProteomicsDB" id="295553">
    <molecule id="Q8VE43-2"/>
</dbReference>
<dbReference type="Antibodypedia" id="19928">
    <property type="antibodies" value="97 antibodies from 18 providers"/>
</dbReference>
<dbReference type="DNASU" id="210029"/>
<dbReference type="Ensembl" id="ENSMUST00000036742.14">
    <molecule id="Q8VE43-1"/>
    <property type="protein sequence ID" value="ENSMUSP00000038126.8"/>
    <property type="gene ID" value="ENSMUSG00000039208.16"/>
</dbReference>
<dbReference type="Ensembl" id="ENSMUST00000106089.8">
    <molecule id="Q8VE43-2"/>
    <property type="protein sequence ID" value="ENSMUSP00000101695.2"/>
    <property type="gene ID" value="ENSMUSG00000039208.16"/>
</dbReference>
<dbReference type="GeneID" id="210029"/>
<dbReference type="KEGG" id="mmu:210029"/>
<dbReference type="UCSC" id="uc007mwd.1">
    <molecule id="Q8VE43-1"/>
    <property type="organism name" value="mouse"/>
</dbReference>
<dbReference type="AGR" id="MGI:2384806"/>
<dbReference type="CTD" id="284207"/>
<dbReference type="MGI" id="MGI:2384806">
    <property type="gene designation" value="Metrnl"/>
</dbReference>
<dbReference type="VEuPathDB" id="HostDB:ENSMUSG00000039208"/>
<dbReference type="eggNOG" id="ENOG502QUQB">
    <property type="taxonomic scope" value="Eukaryota"/>
</dbReference>
<dbReference type="GeneTree" id="ENSGT00390000001390"/>
<dbReference type="HOGENOM" id="CLU_069970_0_0_1"/>
<dbReference type="InParanoid" id="Q8VE43"/>
<dbReference type="OMA" id="ISFCQYS"/>
<dbReference type="OrthoDB" id="6092325at2759"/>
<dbReference type="PhylomeDB" id="Q8VE43"/>
<dbReference type="TreeFam" id="TF330918"/>
<dbReference type="BioGRID-ORCS" id="210029">
    <property type="hits" value="2 hits in 76 CRISPR screens"/>
</dbReference>
<dbReference type="ChiTaRS" id="Metrnl">
    <property type="organism name" value="mouse"/>
</dbReference>
<dbReference type="PRO" id="PR:Q8VE43"/>
<dbReference type="Proteomes" id="UP000000589">
    <property type="component" value="Chromosome 11"/>
</dbReference>
<dbReference type="RNAct" id="Q8VE43">
    <property type="molecule type" value="protein"/>
</dbReference>
<dbReference type="Bgee" id="ENSMUSG00000039208">
    <property type="expression patterns" value="Expressed in lip and 208 other cell types or tissues"/>
</dbReference>
<dbReference type="ExpressionAtlas" id="Q8VE43">
    <property type="expression patterns" value="baseline and differential"/>
</dbReference>
<dbReference type="GO" id="GO:0005615">
    <property type="term" value="C:extracellular space"/>
    <property type="evidence" value="ECO:0000314"/>
    <property type="project" value="UniProtKB"/>
</dbReference>
<dbReference type="GO" id="GO:0005179">
    <property type="term" value="F:hormone activity"/>
    <property type="evidence" value="ECO:0000314"/>
    <property type="project" value="UniProtKB"/>
</dbReference>
<dbReference type="GO" id="GO:0050873">
    <property type="term" value="P:brown fat cell differentiation"/>
    <property type="evidence" value="ECO:0000314"/>
    <property type="project" value="UniProtKB"/>
</dbReference>
<dbReference type="GO" id="GO:0097009">
    <property type="term" value="P:energy homeostasis"/>
    <property type="evidence" value="ECO:0000314"/>
    <property type="project" value="UniProtKB"/>
</dbReference>
<dbReference type="GO" id="GO:0045444">
    <property type="term" value="P:fat cell differentiation"/>
    <property type="evidence" value="ECO:0000314"/>
    <property type="project" value="UniProtKB"/>
</dbReference>
<dbReference type="GO" id="GO:0050728">
    <property type="term" value="P:negative regulation of inflammatory response"/>
    <property type="evidence" value="ECO:0000314"/>
    <property type="project" value="UniProtKB"/>
</dbReference>
<dbReference type="GO" id="GO:0090336">
    <property type="term" value="P:positive regulation of brown fat cell differentiation"/>
    <property type="evidence" value="ECO:0000314"/>
    <property type="project" value="UniProtKB"/>
</dbReference>
<dbReference type="GO" id="GO:0009409">
    <property type="term" value="P:response to cold"/>
    <property type="evidence" value="ECO:0000314"/>
    <property type="project" value="UniProtKB"/>
</dbReference>
<dbReference type="GO" id="GO:0014850">
    <property type="term" value="P:response to muscle activity"/>
    <property type="evidence" value="ECO:0000314"/>
    <property type="project" value="UniProtKB"/>
</dbReference>
<dbReference type="InterPro" id="IPR051998">
    <property type="entry name" value="Meteorin-like"/>
</dbReference>
<dbReference type="PANTHER" id="PTHR28593">
    <property type="entry name" value="METEORIN-LIKE PROTEIN"/>
    <property type="match status" value="1"/>
</dbReference>
<dbReference type="PANTHER" id="PTHR28593:SF1">
    <property type="entry name" value="METEORIN-LIKE PROTEIN"/>
    <property type="match status" value="1"/>
</dbReference>
<gene>
    <name type="primary">Metrnl</name>
</gene>
<protein>
    <recommendedName>
        <fullName>Meteorin-like protein</fullName>
    </recommendedName>
    <alternativeName>
        <fullName>Subfatin</fullName>
    </alternativeName>
</protein>
<name>METRL_MOUSE</name>
<keyword id="KW-0002">3D-structure</keyword>
<keyword id="KW-0025">Alternative splicing</keyword>
<keyword id="KW-1015">Disulfide bond</keyword>
<keyword id="KW-0325">Glycoprotein</keyword>
<keyword id="KW-0372">Hormone</keyword>
<keyword id="KW-1185">Reference proteome</keyword>
<keyword id="KW-0964">Secreted</keyword>
<keyword id="KW-0732">Signal</keyword>
<reference key="1">
    <citation type="journal article" date="2005" name="Science">
        <title>The transcriptional landscape of the mammalian genome.</title>
        <authorList>
            <person name="Carninci P."/>
            <person name="Kasukawa T."/>
            <person name="Katayama S."/>
            <person name="Gough J."/>
            <person name="Frith M.C."/>
            <person name="Maeda N."/>
            <person name="Oyama R."/>
            <person name="Ravasi T."/>
            <person name="Lenhard B."/>
            <person name="Wells C."/>
            <person name="Kodzius R."/>
            <person name="Shimokawa K."/>
            <person name="Bajic V.B."/>
            <person name="Brenner S.E."/>
            <person name="Batalov S."/>
            <person name="Forrest A.R."/>
            <person name="Zavolan M."/>
            <person name="Davis M.J."/>
            <person name="Wilming L.G."/>
            <person name="Aidinis V."/>
            <person name="Allen J.E."/>
            <person name="Ambesi-Impiombato A."/>
            <person name="Apweiler R."/>
            <person name="Aturaliya R.N."/>
            <person name="Bailey T.L."/>
            <person name="Bansal M."/>
            <person name="Baxter L."/>
            <person name="Beisel K.W."/>
            <person name="Bersano T."/>
            <person name="Bono H."/>
            <person name="Chalk A.M."/>
            <person name="Chiu K.P."/>
            <person name="Choudhary V."/>
            <person name="Christoffels A."/>
            <person name="Clutterbuck D.R."/>
            <person name="Crowe M.L."/>
            <person name="Dalla E."/>
            <person name="Dalrymple B.P."/>
            <person name="de Bono B."/>
            <person name="Della Gatta G."/>
            <person name="di Bernardo D."/>
            <person name="Down T."/>
            <person name="Engstrom P."/>
            <person name="Fagiolini M."/>
            <person name="Faulkner G."/>
            <person name="Fletcher C.F."/>
            <person name="Fukushima T."/>
            <person name="Furuno M."/>
            <person name="Futaki S."/>
            <person name="Gariboldi M."/>
            <person name="Georgii-Hemming P."/>
            <person name="Gingeras T.R."/>
            <person name="Gojobori T."/>
            <person name="Green R.E."/>
            <person name="Gustincich S."/>
            <person name="Harbers M."/>
            <person name="Hayashi Y."/>
            <person name="Hensch T.K."/>
            <person name="Hirokawa N."/>
            <person name="Hill D."/>
            <person name="Huminiecki L."/>
            <person name="Iacono M."/>
            <person name="Ikeo K."/>
            <person name="Iwama A."/>
            <person name="Ishikawa T."/>
            <person name="Jakt M."/>
            <person name="Kanapin A."/>
            <person name="Katoh M."/>
            <person name="Kawasawa Y."/>
            <person name="Kelso J."/>
            <person name="Kitamura H."/>
            <person name="Kitano H."/>
            <person name="Kollias G."/>
            <person name="Krishnan S.P."/>
            <person name="Kruger A."/>
            <person name="Kummerfeld S.K."/>
            <person name="Kurochkin I.V."/>
            <person name="Lareau L.F."/>
            <person name="Lazarevic D."/>
            <person name="Lipovich L."/>
            <person name="Liu J."/>
            <person name="Liuni S."/>
            <person name="McWilliam S."/>
            <person name="Madan Babu M."/>
            <person name="Madera M."/>
            <person name="Marchionni L."/>
            <person name="Matsuda H."/>
            <person name="Matsuzawa S."/>
            <person name="Miki H."/>
            <person name="Mignone F."/>
            <person name="Miyake S."/>
            <person name="Morris K."/>
            <person name="Mottagui-Tabar S."/>
            <person name="Mulder N."/>
            <person name="Nakano N."/>
            <person name="Nakauchi H."/>
            <person name="Ng P."/>
            <person name="Nilsson R."/>
            <person name="Nishiguchi S."/>
            <person name="Nishikawa S."/>
            <person name="Nori F."/>
            <person name="Ohara O."/>
            <person name="Okazaki Y."/>
            <person name="Orlando V."/>
            <person name="Pang K.C."/>
            <person name="Pavan W.J."/>
            <person name="Pavesi G."/>
            <person name="Pesole G."/>
            <person name="Petrovsky N."/>
            <person name="Piazza S."/>
            <person name="Reed J."/>
            <person name="Reid J.F."/>
            <person name="Ring B.Z."/>
            <person name="Ringwald M."/>
            <person name="Rost B."/>
            <person name="Ruan Y."/>
            <person name="Salzberg S.L."/>
            <person name="Sandelin A."/>
            <person name="Schneider C."/>
            <person name="Schoenbach C."/>
            <person name="Sekiguchi K."/>
            <person name="Semple C.A."/>
            <person name="Seno S."/>
            <person name="Sessa L."/>
            <person name="Sheng Y."/>
            <person name="Shibata Y."/>
            <person name="Shimada H."/>
            <person name="Shimada K."/>
            <person name="Silva D."/>
            <person name="Sinclair B."/>
            <person name="Sperling S."/>
            <person name="Stupka E."/>
            <person name="Sugiura K."/>
            <person name="Sultana R."/>
            <person name="Takenaka Y."/>
            <person name="Taki K."/>
            <person name="Tammoja K."/>
            <person name="Tan S.L."/>
            <person name="Tang S."/>
            <person name="Taylor M.S."/>
            <person name="Tegner J."/>
            <person name="Teichmann S.A."/>
            <person name="Ueda H.R."/>
            <person name="van Nimwegen E."/>
            <person name="Verardo R."/>
            <person name="Wei C.L."/>
            <person name="Yagi K."/>
            <person name="Yamanishi H."/>
            <person name="Zabarovsky E."/>
            <person name="Zhu S."/>
            <person name="Zimmer A."/>
            <person name="Hide W."/>
            <person name="Bult C."/>
            <person name="Grimmond S.M."/>
            <person name="Teasdale R.D."/>
            <person name="Liu E.T."/>
            <person name="Brusic V."/>
            <person name="Quackenbush J."/>
            <person name="Wahlestedt C."/>
            <person name="Mattick J.S."/>
            <person name="Hume D.A."/>
            <person name="Kai C."/>
            <person name="Sasaki D."/>
            <person name="Tomaru Y."/>
            <person name="Fukuda S."/>
            <person name="Kanamori-Katayama M."/>
            <person name="Suzuki M."/>
            <person name="Aoki J."/>
            <person name="Arakawa T."/>
            <person name="Iida J."/>
            <person name="Imamura K."/>
            <person name="Itoh M."/>
            <person name="Kato T."/>
            <person name="Kawaji H."/>
            <person name="Kawagashira N."/>
            <person name="Kawashima T."/>
            <person name="Kojima M."/>
            <person name="Kondo S."/>
            <person name="Konno H."/>
            <person name="Nakano K."/>
            <person name="Ninomiya N."/>
            <person name="Nishio T."/>
            <person name="Okada M."/>
            <person name="Plessy C."/>
            <person name="Shibata K."/>
            <person name="Shiraki T."/>
            <person name="Suzuki S."/>
            <person name="Tagami M."/>
            <person name="Waki K."/>
            <person name="Watahiki A."/>
            <person name="Okamura-Oho Y."/>
            <person name="Suzuki H."/>
            <person name="Kawai J."/>
            <person name="Hayashizaki Y."/>
        </authorList>
    </citation>
    <scope>NUCLEOTIDE SEQUENCE [LARGE SCALE MRNA] (ISOFORM 1)</scope>
    <source>
        <strain>C57BL/6J</strain>
        <tissue>Embryo</tissue>
    </source>
</reference>
<reference key="2">
    <citation type="journal article" date="2009" name="PLoS Biol.">
        <title>Lineage-specific biology revealed by a finished genome assembly of the mouse.</title>
        <authorList>
            <person name="Church D.M."/>
            <person name="Goodstadt L."/>
            <person name="Hillier L.W."/>
            <person name="Zody M.C."/>
            <person name="Goldstein S."/>
            <person name="She X."/>
            <person name="Bult C.J."/>
            <person name="Agarwala R."/>
            <person name="Cherry J.L."/>
            <person name="DiCuccio M."/>
            <person name="Hlavina W."/>
            <person name="Kapustin Y."/>
            <person name="Meric P."/>
            <person name="Maglott D."/>
            <person name="Birtle Z."/>
            <person name="Marques A.C."/>
            <person name="Graves T."/>
            <person name="Zhou S."/>
            <person name="Teague B."/>
            <person name="Potamousis K."/>
            <person name="Churas C."/>
            <person name="Place M."/>
            <person name="Herschleb J."/>
            <person name="Runnheim R."/>
            <person name="Forrest D."/>
            <person name="Amos-Landgraf J."/>
            <person name="Schwartz D.C."/>
            <person name="Cheng Z."/>
            <person name="Lindblad-Toh K."/>
            <person name="Eichler E.E."/>
            <person name="Ponting C.P."/>
        </authorList>
    </citation>
    <scope>NUCLEOTIDE SEQUENCE [LARGE SCALE GENOMIC DNA]</scope>
    <source>
        <strain>C57BL/6J</strain>
    </source>
</reference>
<reference key="3">
    <citation type="journal article" date="2004" name="Genome Res.">
        <title>The status, quality, and expansion of the NIH full-length cDNA project: the Mammalian Gene Collection (MGC).</title>
        <authorList>
            <consortium name="The MGC Project Team"/>
        </authorList>
    </citation>
    <scope>NUCLEOTIDE SEQUENCE [LARGE SCALE MRNA] (ISOFORMS 1 AND 2)</scope>
    <source>
        <strain>FVB/N</strain>
        <tissue>Colon</tissue>
        <tissue>Kidney</tissue>
        <tissue>Mammary tumor</tissue>
    </source>
</reference>
<reference key="4">
    <citation type="journal article" date="2014" name="Cell">
        <title>Meteorin-like is a hormone that regulates immune-adipose interactions to increase beige fat thermogenesis.</title>
        <authorList>
            <person name="Rao R.R."/>
            <person name="Long J.Z."/>
            <person name="White J.P."/>
            <person name="Svensson K.J."/>
            <person name="Lou J."/>
            <person name="Lokurkar I."/>
            <person name="Jedrychowski M.P."/>
            <person name="Ruas J.L."/>
            <person name="Wrann C.D."/>
            <person name="Lo J.C."/>
            <person name="Camera D.M."/>
            <person name="Lachey J."/>
            <person name="Gygi S."/>
            <person name="Seehra J."/>
            <person name="Hawley J.A."/>
            <person name="Spiegelman B.M."/>
        </authorList>
    </citation>
    <scope>FUNCTION</scope>
    <scope>SUBCELLULAR LOCATION</scope>
    <scope>TISSUE SPECIFICITY</scope>
    <scope>INDUCTION</scope>
    <scope>IDENTIFICATION BY MASS SPECTROMETRY</scope>
</reference>
<reference key="5">
    <citation type="journal article" date="2014" name="CNS Neurosci. Ther.">
        <title>Subfatin is a novel adipokine and unlike Meteorin in adipose and brain expression.</title>
        <authorList>
            <person name="Li Z.Y."/>
            <person name="Zheng S.L."/>
            <person name="Wang P."/>
            <person name="Xu T.Y."/>
            <person name="Guan Y.F."/>
            <person name="Zhang Y.J."/>
            <person name="Miao C.Y."/>
        </authorList>
    </citation>
    <scope>SUBCELLULAR LOCATION</scope>
    <scope>GLYCOSYLATION</scope>
    <scope>TISSUE SPECIFICITY</scope>
    <scope>INDUCTION</scope>
</reference>
<evidence type="ECO:0000255" key="1"/>
<evidence type="ECO:0000255" key="2">
    <source>
        <dbReference type="PROSITE-ProRule" id="PRU00114"/>
    </source>
</evidence>
<evidence type="ECO:0000269" key="3">
    <source>
    </source>
</evidence>
<evidence type="ECO:0000269" key="4">
    <source>
    </source>
</evidence>
<evidence type="ECO:0000303" key="5">
    <source>
    </source>
</evidence>
<evidence type="ECO:0000305" key="6"/>
<evidence type="ECO:0007829" key="7">
    <source>
        <dbReference type="PDB" id="7TLW"/>
    </source>
</evidence>